<comment type="function">
    <text evidence="1">Plays a role in peptidoglycan recycling by cleaving the terminal beta-1,4-linked N-acetylglucosamine (GlcNAc) from peptide-linked peptidoglycan fragments, giving rise to free GlcNAc, anhydro-N-acetylmuramic acid and anhydro-N-acetylmuramic acid-linked peptides.</text>
</comment>
<comment type="catalytic activity">
    <reaction evidence="1">
        <text>Hydrolysis of terminal non-reducing N-acetyl-D-hexosamine residues in N-acetyl-beta-D-hexosaminides.</text>
        <dbReference type="EC" id="3.2.1.52"/>
    </reaction>
</comment>
<comment type="pathway">
    <text evidence="1">Cell wall biogenesis; peptidoglycan recycling.</text>
</comment>
<comment type="subcellular location">
    <subcellularLocation>
        <location evidence="1">Cytoplasm</location>
    </subcellularLocation>
</comment>
<comment type="similarity">
    <text evidence="1">Belongs to the glycosyl hydrolase 3 family. NagZ subfamily.</text>
</comment>
<gene>
    <name evidence="1" type="primary">nagZ</name>
    <name type="ordered locus">plu2822</name>
</gene>
<keyword id="KW-0131">Cell cycle</keyword>
<keyword id="KW-0132">Cell division</keyword>
<keyword id="KW-0133">Cell shape</keyword>
<keyword id="KW-0961">Cell wall biogenesis/degradation</keyword>
<keyword id="KW-0963">Cytoplasm</keyword>
<keyword id="KW-0326">Glycosidase</keyword>
<keyword id="KW-0378">Hydrolase</keyword>
<keyword id="KW-0573">Peptidoglycan synthesis</keyword>
<keyword id="KW-1185">Reference proteome</keyword>
<sequence length="340" mass="38018">MGPVMLDVVGYELDNEEKEILQHPLVGGLILFTRNFYDVEQLRELVRQIRKASRHRLVIAVDQEGGRVQRFREGFTCLPAAQSFAGLSDNLNGTQLAEEAGWLMASEMIAMDIDISFAPVLDLGHQCAAIGERSFHEDPEQAKMMAEHFIKGMHSAGMKSTGKHFPGHGAVNADSHKETPCDDRPLEVICHHDMSIFRDFIQRNLLDAIMPAHVIYPQVDKHPASGSSYWLKSVLRQQLGFNGVIFSDDLSMEGAAMMGSYVERGQTALNAGCDMILICNNRDGAVSALDNLPLTKVEKLSELYHRGGQYSLNELKNSERWQQANKALTALYEQWQDCAR</sequence>
<reference key="1">
    <citation type="journal article" date="2003" name="Nat. Biotechnol.">
        <title>The genome sequence of the entomopathogenic bacterium Photorhabdus luminescens.</title>
        <authorList>
            <person name="Duchaud E."/>
            <person name="Rusniok C."/>
            <person name="Frangeul L."/>
            <person name="Buchrieser C."/>
            <person name="Givaudan A."/>
            <person name="Taourit S."/>
            <person name="Bocs S."/>
            <person name="Boursaux-Eude C."/>
            <person name="Chandler M."/>
            <person name="Charles J.-F."/>
            <person name="Dassa E."/>
            <person name="Derose R."/>
            <person name="Derzelle S."/>
            <person name="Freyssinet G."/>
            <person name="Gaudriault S."/>
            <person name="Medigue C."/>
            <person name="Lanois A."/>
            <person name="Powell K."/>
            <person name="Siguier P."/>
            <person name="Vincent R."/>
            <person name="Wingate V."/>
            <person name="Zouine M."/>
            <person name="Glaser P."/>
            <person name="Boemare N."/>
            <person name="Danchin A."/>
            <person name="Kunst F."/>
        </authorList>
    </citation>
    <scope>NUCLEOTIDE SEQUENCE [LARGE SCALE GENOMIC DNA]</scope>
    <source>
        <strain>DSM 15139 / CIP 105565 / TT01</strain>
    </source>
</reference>
<dbReference type="EC" id="3.2.1.52" evidence="1"/>
<dbReference type="EMBL" id="BX571868">
    <property type="protein sequence ID" value="CAE15196.1"/>
    <property type="molecule type" value="Genomic_DNA"/>
</dbReference>
<dbReference type="RefSeq" id="WP_011147042.1">
    <property type="nucleotide sequence ID" value="NC_005126.1"/>
</dbReference>
<dbReference type="SMR" id="Q7N397"/>
<dbReference type="STRING" id="243265.plu2822"/>
<dbReference type="CAZy" id="GH3">
    <property type="family name" value="Glycoside Hydrolase Family 3"/>
</dbReference>
<dbReference type="GeneID" id="48849084"/>
<dbReference type="KEGG" id="plu:plu2822"/>
<dbReference type="eggNOG" id="COG1472">
    <property type="taxonomic scope" value="Bacteria"/>
</dbReference>
<dbReference type="HOGENOM" id="CLU_008392_0_0_6"/>
<dbReference type="OrthoDB" id="9786661at2"/>
<dbReference type="UniPathway" id="UPA00544"/>
<dbReference type="Proteomes" id="UP000002514">
    <property type="component" value="Chromosome"/>
</dbReference>
<dbReference type="GO" id="GO:0005737">
    <property type="term" value="C:cytoplasm"/>
    <property type="evidence" value="ECO:0007669"/>
    <property type="project" value="UniProtKB-SubCell"/>
</dbReference>
<dbReference type="GO" id="GO:0004563">
    <property type="term" value="F:beta-N-acetylhexosaminidase activity"/>
    <property type="evidence" value="ECO:0007669"/>
    <property type="project" value="UniProtKB-UniRule"/>
</dbReference>
<dbReference type="GO" id="GO:0005975">
    <property type="term" value="P:carbohydrate metabolic process"/>
    <property type="evidence" value="ECO:0007669"/>
    <property type="project" value="InterPro"/>
</dbReference>
<dbReference type="GO" id="GO:0051301">
    <property type="term" value="P:cell division"/>
    <property type="evidence" value="ECO:0007669"/>
    <property type="project" value="UniProtKB-KW"/>
</dbReference>
<dbReference type="GO" id="GO:0071555">
    <property type="term" value="P:cell wall organization"/>
    <property type="evidence" value="ECO:0007669"/>
    <property type="project" value="UniProtKB-KW"/>
</dbReference>
<dbReference type="GO" id="GO:0009252">
    <property type="term" value="P:peptidoglycan biosynthetic process"/>
    <property type="evidence" value="ECO:0007669"/>
    <property type="project" value="UniProtKB-KW"/>
</dbReference>
<dbReference type="GO" id="GO:0009254">
    <property type="term" value="P:peptidoglycan turnover"/>
    <property type="evidence" value="ECO:0007669"/>
    <property type="project" value="UniProtKB-UniRule"/>
</dbReference>
<dbReference type="GO" id="GO:0008360">
    <property type="term" value="P:regulation of cell shape"/>
    <property type="evidence" value="ECO:0007669"/>
    <property type="project" value="UniProtKB-KW"/>
</dbReference>
<dbReference type="FunFam" id="3.20.20.300:FF:000001">
    <property type="entry name" value="Beta-hexosaminidase"/>
    <property type="match status" value="1"/>
</dbReference>
<dbReference type="Gene3D" id="3.20.20.300">
    <property type="entry name" value="Glycoside hydrolase, family 3, N-terminal domain"/>
    <property type="match status" value="1"/>
</dbReference>
<dbReference type="HAMAP" id="MF_00364">
    <property type="entry name" value="NagZ"/>
    <property type="match status" value="1"/>
</dbReference>
<dbReference type="InterPro" id="IPR022956">
    <property type="entry name" value="Beta_hexosaminidase_bac"/>
</dbReference>
<dbReference type="InterPro" id="IPR019800">
    <property type="entry name" value="Glyco_hydro_3_AS"/>
</dbReference>
<dbReference type="InterPro" id="IPR001764">
    <property type="entry name" value="Glyco_hydro_3_N"/>
</dbReference>
<dbReference type="InterPro" id="IPR036962">
    <property type="entry name" value="Glyco_hydro_3_N_sf"/>
</dbReference>
<dbReference type="InterPro" id="IPR017853">
    <property type="entry name" value="Glycoside_hydrolase_SF"/>
</dbReference>
<dbReference type="InterPro" id="IPR050226">
    <property type="entry name" value="NagZ_Beta-hexosaminidase"/>
</dbReference>
<dbReference type="NCBIfam" id="NF003740">
    <property type="entry name" value="PRK05337.1"/>
    <property type="match status" value="1"/>
</dbReference>
<dbReference type="PANTHER" id="PTHR30480:SF13">
    <property type="entry name" value="BETA-HEXOSAMINIDASE"/>
    <property type="match status" value="1"/>
</dbReference>
<dbReference type="PANTHER" id="PTHR30480">
    <property type="entry name" value="BETA-HEXOSAMINIDASE-RELATED"/>
    <property type="match status" value="1"/>
</dbReference>
<dbReference type="Pfam" id="PF00933">
    <property type="entry name" value="Glyco_hydro_3"/>
    <property type="match status" value="1"/>
</dbReference>
<dbReference type="SUPFAM" id="SSF51445">
    <property type="entry name" value="(Trans)glycosidases"/>
    <property type="match status" value="1"/>
</dbReference>
<dbReference type="PROSITE" id="PS00775">
    <property type="entry name" value="GLYCOSYL_HYDROL_F3"/>
    <property type="match status" value="1"/>
</dbReference>
<organism>
    <name type="scientific">Photorhabdus laumondii subsp. laumondii (strain DSM 15139 / CIP 105565 / TT01)</name>
    <name type="common">Photorhabdus luminescens subsp. laumondii</name>
    <dbReference type="NCBI Taxonomy" id="243265"/>
    <lineage>
        <taxon>Bacteria</taxon>
        <taxon>Pseudomonadati</taxon>
        <taxon>Pseudomonadota</taxon>
        <taxon>Gammaproteobacteria</taxon>
        <taxon>Enterobacterales</taxon>
        <taxon>Morganellaceae</taxon>
        <taxon>Photorhabdus</taxon>
    </lineage>
</organism>
<evidence type="ECO:0000255" key="1">
    <source>
        <dbReference type="HAMAP-Rule" id="MF_00364"/>
    </source>
</evidence>
<name>NAGZ_PHOLL</name>
<accession>Q7N397</accession>
<feature type="chain" id="PRO_0000210794" description="Beta-hexosaminidase">
    <location>
        <begin position="1"/>
        <end position="340"/>
    </location>
</feature>
<feature type="active site" description="Proton donor/acceptor" evidence="1">
    <location>
        <position position="176"/>
    </location>
</feature>
<feature type="active site" description="Nucleophile" evidence="1">
    <location>
        <position position="248"/>
    </location>
</feature>
<feature type="binding site" evidence="1">
    <location>
        <position position="62"/>
    </location>
    <ligand>
        <name>substrate</name>
    </ligand>
</feature>
<feature type="binding site" evidence="1">
    <location>
        <position position="70"/>
    </location>
    <ligand>
        <name>substrate</name>
    </ligand>
</feature>
<feature type="binding site" evidence="1">
    <location>
        <position position="133"/>
    </location>
    <ligand>
        <name>substrate</name>
    </ligand>
</feature>
<feature type="binding site" evidence="1">
    <location>
        <begin position="163"/>
        <end position="164"/>
    </location>
    <ligand>
        <name>substrate</name>
    </ligand>
</feature>
<feature type="site" description="Important for catalytic activity" evidence="1">
    <location>
        <position position="174"/>
    </location>
</feature>
<protein>
    <recommendedName>
        <fullName evidence="1">Beta-hexosaminidase</fullName>
        <ecNumber evidence="1">3.2.1.52</ecNumber>
    </recommendedName>
    <alternativeName>
        <fullName evidence="1">Beta-N-acetylhexosaminidase</fullName>
    </alternativeName>
    <alternativeName>
        <fullName evidence="1">N-acetyl-beta-glucosaminidase</fullName>
    </alternativeName>
</protein>
<proteinExistence type="inferred from homology"/>